<accession>P49003</accession>
<accession>Q8CCE0</accession>
<reference key="1">
    <citation type="journal article" date="1994" name="Dev. Biol.">
        <title>BMP5 and the molecular, skeletal, and soft-tissue alterations in short ear mice.</title>
        <authorList>
            <person name="King J.A."/>
            <person name="Marker P.C."/>
            <person name="Seung K.J."/>
            <person name="Kingsley D.M."/>
        </authorList>
    </citation>
    <scope>NUCLEOTIDE SEQUENCE [MRNA]</scope>
    <scope>FUNCTION</scope>
    <scope>DISRUPTION PHENOTYPE</scope>
    <source>
        <strain>C3H/KW</strain>
    </source>
</reference>
<reference key="2">
    <citation type="journal article" date="2005" name="Science">
        <title>The transcriptional landscape of the mammalian genome.</title>
        <authorList>
            <person name="Carninci P."/>
            <person name="Kasukawa T."/>
            <person name="Katayama S."/>
            <person name="Gough J."/>
            <person name="Frith M.C."/>
            <person name="Maeda N."/>
            <person name="Oyama R."/>
            <person name="Ravasi T."/>
            <person name="Lenhard B."/>
            <person name="Wells C."/>
            <person name="Kodzius R."/>
            <person name="Shimokawa K."/>
            <person name="Bajic V.B."/>
            <person name="Brenner S.E."/>
            <person name="Batalov S."/>
            <person name="Forrest A.R."/>
            <person name="Zavolan M."/>
            <person name="Davis M.J."/>
            <person name="Wilming L.G."/>
            <person name="Aidinis V."/>
            <person name="Allen J.E."/>
            <person name="Ambesi-Impiombato A."/>
            <person name="Apweiler R."/>
            <person name="Aturaliya R.N."/>
            <person name="Bailey T.L."/>
            <person name="Bansal M."/>
            <person name="Baxter L."/>
            <person name="Beisel K.W."/>
            <person name="Bersano T."/>
            <person name="Bono H."/>
            <person name="Chalk A.M."/>
            <person name="Chiu K.P."/>
            <person name="Choudhary V."/>
            <person name="Christoffels A."/>
            <person name="Clutterbuck D.R."/>
            <person name="Crowe M.L."/>
            <person name="Dalla E."/>
            <person name="Dalrymple B.P."/>
            <person name="de Bono B."/>
            <person name="Della Gatta G."/>
            <person name="di Bernardo D."/>
            <person name="Down T."/>
            <person name="Engstrom P."/>
            <person name="Fagiolini M."/>
            <person name="Faulkner G."/>
            <person name="Fletcher C.F."/>
            <person name="Fukushima T."/>
            <person name="Furuno M."/>
            <person name="Futaki S."/>
            <person name="Gariboldi M."/>
            <person name="Georgii-Hemming P."/>
            <person name="Gingeras T.R."/>
            <person name="Gojobori T."/>
            <person name="Green R.E."/>
            <person name="Gustincich S."/>
            <person name="Harbers M."/>
            <person name="Hayashi Y."/>
            <person name="Hensch T.K."/>
            <person name="Hirokawa N."/>
            <person name="Hill D."/>
            <person name="Huminiecki L."/>
            <person name="Iacono M."/>
            <person name="Ikeo K."/>
            <person name="Iwama A."/>
            <person name="Ishikawa T."/>
            <person name="Jakt M."/>
            <person name="Kanapin A."/>
            <person name="Katoh M."/>
            <person name="Kawasawa Y."/>
            <person name="Kelso J."/>
            <person name="Kitamura H."/>
            <person name="Kitano H."/>
            <person name="Kollias G."/>
            <person name="Krishnan S.P."/>
            <person name="Kruger A."/>
            <person name="Kummerfeld S.K."/>
            <person name="Kurochkin I.V."/>
            <person name="Lareau L.F."/>
            <person name="Lazarevic D."/>
            <person name="Lipovich L."/>
            <person name="Liu J."/>
            <person name="Liuni S."/>
            <person name="McWilliam S."/>
            <person name="Madan Babu M."/>
            <person name="Madera M."/>
            <person name="Marchionni L."/>
            <person name="Matsuda H."/>
            <person name="Matsuzawa S."/>
            <person name="Miki H."/>
            <person name="Mignone F."/>
            <person name="Miyake S."/>
            <person name="Morris K."/>
            <person name="Mottagui-Tabar S."/>
            <person name="Mulder N."/>
            <person name="Nakano N."/>
            <person name="Nakauchi H."/>
            <person name="Ng P."/>
            <person name="Nilsson R."/>
            <person name="Nishiguchi S."/>
            <person name="Nishikawa S."/>
            <person name="Nori F."/>
            <person name="Ohara O."/>
            <person name="Okazaki Y."/>
            <person name="Orlando V."/>
            <person name="Pang K.C."/>
            <person name="Pavan W.J."/>
            <person name="Pavesi G."/>
            <person name="Pesole G."/>
            <person name="Petrovsky N."/>
            <person name="Piazza S."/>
            <person name="Reed J."/>
            <person name="Reid J.F."/>
            <person name="Ring B.Z."/>
            <person name="Ringwald M."/>
            <person name="Rost B."/>
            <person name="Ruan Y."/>
            <person name="Salzberg S.L."/>
            <person name="Sandelin A."/>
            <person name="Schneider C."/>
            <person name="Schoenbach C."/>
            <person name="Sekiguchi K."/>
            <person name="Semple C.A."/>
            <person name="Seno S."/>
            <person name="Sessa L."/>
            <person name="Sheng Y."/>
            <person name="Shibata Y."/>
            <person name="Shimada H."/>
            <person name="Shimada K."/>
            <person name="Silva D."/>
            <person name="Sinclair B."/>
            <person name="Sperling S."/>
            <person name="Stupka E."/>
            <person name="Sugiura K."/>
            <person name="Sultana R."/>
            <person name="Takenaka Y."/>
            <person name="Taki K."/>
            <person name="Tammoja K."/>
            <person name="Tan S.L."/>
            <person name="Tang S."/>
            <person name="Taylor M.S."/>
            <person name="Tegner J."/>
            <person name="Teichmann S.A."/>
            <person name="Ueda H.R."/>
            <person name="van Nimwegen E."/>
            <person name="Verardo R."/>
            <person name="Wei C.L."/>
            <person name="Yagi K."/>
            <person name="Yamanishi H."/>
            <person name="Zabarovsky E."/>
            <person name="Zhu S."/>
            <person name="Zimmer A."/>
            <person name="Hide W."/>
            <person name="Bult C."/>
            <person name="Grimmond S.M."/>
            <person name="Teasdale R.D."/>
            <person name="Liu E.T."/>
            <person name="Brusic V."/>
            <person name="Quackenbush J."/>
            <person name="Wahlestedt C."/>
            <person name="Mattick J.S."/>
            <person name="Hume D.A."/>
            <person name="Kai C."/>
            <person name="Sasaki D."/>
            <person name="Tomaru Y."/>
            <person name="Fukuda S."/>
            <person name="Kanamori-Katayama M."/>
            <person name="Suzuki M."/>
            <person name="Aoki J."/>
            <person name="Arakawa T."/>
            <person name="Iida J."/>
            <person name="Imamura K."/>
            <person name="Itoh M."/>
            <person name="Kato T."/>
            <person name="Kawaji H."/>
            <person name="Kawagashira N."/>
            <person name="Kawashima T."/>
            <person name="Kojima M."/>
            <person name="Kondo S."/>
            <person name="Konno H."/>
            <person name="Nakano K."/>
            <person name="Ninomiya N."/>
            <person name="Nishio T."/>
            <person name="Okada M."/>
            <person name="Plessy C."/>
            <person name="Shibata K."/>
            <person name="Shiraki T."/>
            <person name="Suzuki S."/>
            <person name="Tagami M."/>
            <person name="Waki K."/>
            <person name="Watahiki A."/>
            <person name="Okamura-Oho Y."/>
            <person name="Suzuki H."/>
            <person name="Kawai J."/>
            <person name="Hayashizaki Y."/>
        </authorList>
    </citation>
    <scope>NUCLEOTIDE SEQUENCE [LARGE SCALE MRNA] (ISOFORM 2)</scope>
    <source>
        <strain>C57BL/6J</strain>
        <tissue>Lung</tissue>
    </source>
</reference>
<reference key="3">
    <citation type="journal article" date="2009" name="PLoS Biol.">
        <title>Lineage-specific biology revealed by a finished genome assembly of the mouse.</title>
        <authorList>
            <person name="Church D.M."/>
            <person name="Goodstadt L."/>
            <person name="Hillier L.W."/>
            <person name="Zody M.C."/>
            <person name="Goldstein S."/>
            <person name="She X."/>
            <person name="Bult C.J."/>
            <person name="Agarwala R."/>
            <person name="Cherry J.L."/>
            <person name="DiCuccio M."/>
            <person name="Hlavina W."/>
            <person name="Kapustin Y."/>
            <person name="Meric P."/>
            <person name="Maglott D."/>
            <person name="Birtle Z."/>
            <person name="Marques A.C."/>
            <person name="Graves T."/>
            <person name="Zhou S."/>
            <person name="Teague B."/>
            <person name="Potamousis K."/>
            <person name="Churas C."/>
            <person name="Place M."/>
            <person name="Herschleb J."/>
            <person name="Runnheim R."/>
            <person name="Forrest D."/>
            <person name="Amos-Landgraf J."/>
            <person name="Schwartz D.C."/>
            <person name="Cheng Z."/>
            <person name="Lindblad-Toh K."/>
            <person name="Eichler E.E."/>
            <person name="Ponting C.P."/>
        </authorList>
    </citation>
    <scope>NUCLEOTIDE SEQUENCE [LARGE SCALE GENOMIC DNA]</scope>
    <source>
        <strain>C57BL/6J</strain>
    </source>
</reference>
<reference key="4">
    <citation type="journal article" date="2018" name="Blood">
        <title>Erythroferrone inhibits the induction of hepcidin by BMP6.</title>
        <authorList>
            <person name="Arezes J."/>
            <person name="Foy N."/>
            <person name="McHugh K."/>
            <person name="Sawant A."/>
            <person name="Quinkert D."/>
            <person name="Terraube V."/>
            <person name="Brinth A."/>
            <person name="Tam M."/>
            <person name="LaVallie E.R."/>
            <person name="Taylor S."/>
            <person name="Armitage A.E."/>
            <person name="Pasricha S.R."/>
            <person name="Cunningham O."/>
            <person name="Lambert M."/>
            <person name="Draper S.J."/>
            <person name="Jasuja R."/>
            <person name="Drakesmith H."/>
        </authorList>
    </citation>
    <scope>FUNCTION</scope>
    <scope>INTERACTION WITH ERFE</scope>
</reference>
<reference key="5">
    <citation type="journal article" date="2018" name="J. Neurosci.">
        <title>BMP/SMAD Pathway Promotes Neurogenesis of Midbrain Dopaminergic Neurons In Vivo and in Human Induced Pluripotent and Neural Stem Cells.</title>
        <authorList>
            <person name="Jovanovic V.M."/>
            <person name="Salti A."/>
            <person name="Tilleman H."/>
            <person name="Zega K."/>
            <person name="Jukic M.M."/>
            <person name="Zou H."/>
            <person name="Friedel R.H."/>
            <person name="Prakash N."/>
            <person name="Blaess S."/>
            <person name="Edenhofer F."/>
            <person name="Brodski C."/>
        </authorList>
    </citation>
    <scope>FUNCTION</scope>
    <scope>DISRUPTION PHENOTYPE</scope>
</reference>
<gene>
    <name type="primary">Bmp5</name>
    <name type="synonym">Bmp-5</name>
</gene>
<evidence type="ECO:0000250" key="1"/>
<evidence type="ECO:0000250" key="2">
    <source>
        <dbReference type="UniProtKB" id="P22003"/>
    </source>
</evidence>
<evidence type="ECO:0000255" key="3"/>
<evidence type="ECO:0000256" key="4">
    <source>
        <dbReference type="SAM" id="MobiDB-lite"/>
    </source>
</evidence>
<evidence type="ECO:0000269" key="5">
    <source>
    </source>
</evidence>
<evidence type="ECO:0000269" key="6">
    <source>
    </source>
</evidence>
<evidence type="ECO:0000269" key="7">
    <source>
    </source>
</evidence>
<evidence type="ECO:0000303" key="8">
    <source>
    </source>
</evidence>
<evidence type="ECO:0000305" key="9"/>
<keyword id="KW-0025">Alternative splicing</keyword>
<keyword id="KW-0891">Chondrogenesis</keyword>
<keyword id="KW-0165">Cleavage on pair of basic residues</keyword>
<keyword id="KW-0202">Cytokine</keyword>
<keyword id="KW-0217">Developmental protein</keyword>
<keyword id="KW-0221">Differentiation</keyword>
<keyword id="KW-1015">Disulfide bond</keyword>
<keyword id="KW-0325">Glycoprotein</keyword>
<keyword id="KW-0339">Growth factor</keyword>
<keyword id="KW-0892">Osteogenesis</keyword>
<keyword id="KW-1185">Reference proteome</keyword>
<keyword id="KW-0964">Secreted</keyword>
<keyword id="KW-0732">Signal</keyword>
<name>BMP5_MOUSE</name>
<proteinExistence type="evidence at protein level"/>
<protein>
    <recommendedName>
        <fullName>Bone morphogenetic protein 5</fullName>
        <shortName>BMP-5</shortName>
    </recommendedName>
</protein>
<dbReference type="EMBL" id="L41145">
    <property type="protein sequence ID" value="AAA64612.1"/>
    <property type="molecule type" value="mRNA"/>
</dbReference>
<dbReference type="EMBL" id="AK033362">
    <property type="protein sequence ID" value="BAC28247.1"/>
    <property type="molecule type" value="mRNA"/>
</dbReference>
<dbReference type="EMBL" id="AC079245">
    <property type="status" value="NOT_ANNOTATED_CDS"/>
    <property type="molecule type" value="Genomic_DNA"/>
</dbReference>
<dbReference type="EMBL" id="AC144940">
    <property type="status" value="NOT_ANNOTATED_CDS"/>
    <property type="molecule type" value="Genomic_DNA"/>
</dbReference>
<dbReference type="CCDS" id="CCDS23348.1">
    <molecule id="P49003-2"/>
</dbReference>
<dbReference type="PIR" id="I49542">
    <property type="entry name" value="I49542"/>
</dbReference>
<dbReference type="RefSeq" id="NP_031581.2">
    <molecule id="P49003-2"/>
    <property type="nucleotide sequence ID" value="NM_007555.4"/>
</dbReference>
<dbReference type="SMR" id="P49003"/>
<dbReference type="BioGRID" id="198365">
    <property type="interactions" value="1"/>
</dbReference>
<dbReference type="FunCoup" id="P49003">
    <property type="interactions" value="494"/>
</dbReference>
<dbReference type="STRING" id="10090.ENSMUSP00000012281"/>
<dbReference type="GlyCosmos" id="P49003">
    <property type="glycosylation" value="4 sites, No reported glycans"/>
</dbReference>
<dbReference type="GlyGen" id="P49003">
    <property type="glycosylation" value="4 sites, 1 N-linked glycan (1 site)"/>
</dbReference>
<dbReference type="PhosphoSitePlus" id="P49003"/>
<dbReference type="jPOST" id="P49003"/>
<dbReference type="PaxDb" id="10090-ENSMUSP00000012281"/>
<dbReference type="ProteomicsDB" id="281696">
    <molecule id="P49003-1"/>
</dbReference>
<dbReference type="ProteomicsDB" id="281697">
    <molecule id="P49003-2"/>
</dbReference>
<dbReference type="Antibodypedia" id="17340">
    <property type="antibodies" value="466 antibodies from 35 providers"/>
</dbReference>
<dbReference type="DNASU" id="12160"/>
<dbReference type="Ensembl" id="ENSMUST00000012281.8">
    <molecule id="P49003-2"/>
    <property type="protein sequence ID" value="ENSMUSP00000012281.8"/>
    <property type="gene ID" value="ENSMUSG00000032179.8"/>
</dbReference>
<dbReference type="GeneID" id="12160"/>
<dbReference type="KEGG" id="mmu:12160"/>
<dbReference type="UCSC" id="uc009qsu.1">
    <molecule id="P49003-2"/>
    <property type="organism name" value="mouse"/>
</dbReference>
<dbReference type="AGR" id="MGI:88181"/>
<dbReference type="CTD" id="653"/>
<dbReference type="MGI" id="MGI:88181">
    <property type="gene designation" value="Bmp5"/>
</dbReference>
<dbReference type="VEuPathDB" id="HostDB:ENSMUSG00000032179"/>
<dbReference type="eggNOG" id="KOG3900">
    <property type="taxonomic scope" value="Eukaryota"/>
</dbReference>
<dbReference type="GeneTree" id="ENSGT00940000158644"/>
<dbReference type="HOGENOM" id="CLU_020515_4_1_1"/>
<dbReference type="InParanoid" id="P49003"/>
<dbReference type="OMA" id="NYWLLMD"/>
<dbReference type="OrthoDB" id="9144at9989"/>
<dbReference type="TreeFam" id="TF316134"/>
<dbReference type="BioGRID-ORCS" id="12160">
    <property type="hits" value="0 hits in 79 CRISPR screens"/>
</dbReference>
<dbReference type="ChiTaRS" id="Bmp5">
    <property type="organism name" value="mouse"/>
</dbReference>
<dbReference type="PRO" id="PR:P49003"/>
<dbReference type="Proteomes" id="UP000000589">
    <property type="component" value="Chromosome 9"/>
</dbReference>
<dbReference type="RNAct" id="P49003">
    <property type="molecule type" value="protein"/>
</dbReference>
<dbReference type="Bgee" id="ENSMUSG00000032179">
    <property type="expression patterns" value="Expressed in ureter smooth muscle and 234 other cell types or tissues"/>
</dbReference>
<dbReference type="GO" id="GO:0005615">
    <property type="term" value="C:extracellular space"/>
    <property type="evidence" value="ECO:0007669"/>
    <property type="project" value="UniProtKB-KW"/>
</dbReference>
<dbReference type="GO" id="GO:0031982">
    <property type="term" value="C:vesicle"/>
    <property type="evidence" value="ECO:0007669"/>
    <property type="project" value="Ensembl"/>
</dbReference>
<dbReference type="GO" id="GO:0070700">
    <property type="term" value="F:BMP receptor binding"/>
    <property type="evidence" value="ECO:0000266"/>
    <property type="project" value="MGI"/>
</dbReference>
<dbReference type="GO" id="GO:0005125">
    <property type="term" value="F:cytokine activity"/>
    <property type="evidence" value="ECO:0007669"/>
    <property type="project" value="UniProtKB-KW"/>
</dbReference>
<dbReference type="GO" id="GO:0008083">
    <property type="term" value="F:growth factor activity"/>
    <property type="evidence" value="ECO:0007669"/>
    <property type="project" value="UniProtKB-KW"/>
</dbReference>
<dbReference type="GO" id="GO:1905069">
    <property type="term" value="P:allantois development"/>
    <property type="evidence" value="ECO:0000316"/>
    <property type="project" value="BHF-UCL"/>
</dbReference>
<dbReference type="GO" id="GO:0097065">
    <property type="term" value="P:anterior head development"/>
    <property type="evidence" value="ECO:0000315"/>
    <property type="project" value="MGI"/>
</dbReference>
<dbReference type="GO" id="GO:0030509">
    <property type="term" value="P:BMP signaling pathway"/>
    <property type="evidence" value="ECO:0007669"/>
    <property type="project" value="Ensembl"/>
</dbReference>
<dbReference type="GO" id="GO:0048738">
    <property type="term" value="P:cardiac muscle tissue development"/>
    <property type="evidence" value="ECO:0000316"/>
    <property type="project" value="BHF-UCL"/>
</dbReference>
<dbReference type="GO" id="GO:0060411">
    <property type="term" value="P:cardiac septum morphogenesis"/>
    <property type="evidence" value="ECO:0000316"/>
    <property type="project" value="BHF-UCL"/>
</dbReference>
<dbReference type="GO" id="GO:0051216">
    <property type="term" value="P:cartilage development"/>
    <property type="evidence" value="ECO:0007669"/>
    <property type="project" value="UniProtKB-KW"/>
</dbReference>
<dbReference type="GO" id="GO:0060710">
    <property type="term" value="P:chorio-allantoic fusion"/>
    <property type="evidence" value="ECO:0000316"/>
    <property type="project" value="BHF-UCL"/>
</dbReference>
<dbReference type="GO" id="GO:0043583">
    <property type="term" value="P:ear development"/>
    <property type="evidence" value="ECO:0000315"/>
    <property type="project" value="MGI"/>
</dbReference>
<dbReference type="GO" id="GO:0003272">
    <property type="term" value="P:endocardial cushion formation"/>
    <property type="evidence" value="ECO:0000316"/>
    <property type="project" value="BHF-UCL"/>
</dbReference>
<dbReference type="GO" id="GO:0061384">
    <property type="term" value="P:heart trabecula morphogenesis"/>
    <property type="evidence" value="ECO:0000316"/>
    <property type="project" value="BHF-UCL"/>
</dbReference>
<dbReference type="GO" id="GO:0030902">
    <property type="term" value="P:hindbrain development"/>
    <property type="evidence" value="ECO:0000316"/>
    <property type="project" value="BHF-UCL"/>
</dbReference>
<dbReference type="GO" id="GO:0030539">
    <property type="term" value="P:male genitalia development"/>
    <property type="evidence" value="ECO:0000316"/>
    <property type="project" value="MGI"/>
</dbReference>
<dbReference type="GO" id="GO:0032348">
    <property type="term" value="P:negative regulation of aldosterone biosynthetic process"/>
    <property type="evidence" value="ECO:0007669"/>
    <property type="project" value="Ensembl"/>
</dbReference>
<dbReference type="GO" id="GO:0008285">
    <property type="term" value="P:negative regulation of cell population proliferation"/>
    <property type="evidence" value="ECO:0007669"/>
    <property type="project" value="Ensembl"/>
</dbReference>
<dbReference type="GO" id="GO:2000065">
    <property type="term" value="P:negative regulation of cortisol biosynthetic process"/>
    <property type="evidence" value="ECO:0007669"/>
    <property type="project" value="Ensembl"/>
</dbReference>
<dbReference type="GO" id="GO:0043569">
    <property type="term" value="P:negative regulation of insulin-like growth factor receptor signaling pathway"/>
    <property type="evidence" value="ECO:0007669"/>
    <property type="project" value="Ensembl"/>
</dbReference>
<dbReference type="GO" id="GO:0021502">
    <property type="term" value="P:neural fold elevation formation"/>
    <property type="evidence" value="ECO:0000316"/>
    <property type="project" value="BHF-UCL"/>
</dbReference>
<dbReference type="GO" id="GO:0001503">
    <property type="term" value="P:ossification"/>
    <property type="evidence" value="ECO:0007669"/>
    <property type="project" value="UniProtKB-KW"/>
</dbReference>
<dbReference type="GO" id="GO:0007389">
    <property type="term" value="P:pattern specification process"/>
    <property type="evidence" value="ECO:0000315"/>
    <property type="project" value="MGI"/>
</dbReference>
<dbReference type="GO" id="GO:0003344">
    <property type="term" value="P:pericardium morphogenesis"/>
    <property type="evidence" value="ECO:0000316"/>
    <property type="project" value="BHF-UCL"/>
</dbReference>
<dbReference type="GO" id="GO:0060037">
    <property type="term" value="P:pharyngeal system development"/>
    <property type="evidence" value="ECO:0000316"/>
    <property type="project" value="BHF-UCL"/>
</dbReference>
<dbReference type="GO" id="GO:1900006">
    <property type="term" value="P:positive regulation of dendrite development"/>
    <property type="evidence" value="ECO:0007669"/>
    <property type="project" value="Ensembl"/>
</dbReference>
<dbReference type="GO" id="GO:0050679">
    <property type="term" value="P:positive regulation of epithelial cell proliferation"/>
    <property type="evidence" value="ECO:0007669"/>
    <property type="project" value="Ensembl"/>
</dbReference>
<dbReference type="GO" id="GO:0060391">
    <property type="term" value="P:positive regulation of SMAD protein signal transduction"/>
    <property type="evidence" value="ECO:0007669"/>
    <property type="project" value="Ensembl"/>
</dbReference>
<dbReference type="GO" id="GO:0045944">
    <property type="term" value="P:positive regulation of transcription by RNA polymerase II"/>
    <property type="evidence" value="ECO:0007669"/>
    <property type="project" value="Ensembl"/>
</dbReference>
<dbReference type="GO" id="GO:0001501">
    <property type="term" value="P:skeletal system development"/>
    <property type="evidence" value="ECO:0000315"/>
    <property type="project" value="MGI"/>
</dbReference>
<dbReference type="GO" id="GO:0003323">
    <property type="term" value="P:type B pancreatic cell development"/>
    <property type="evidence" value="ECO:0007669"/>
    <property type="project" value="Ensembl"/>
</dbReference>
<dbReference type="CDD" id="cd19395">
    <property type="entry name" value="TGF_beta_BMP5"/>
    <property type="match status" value="1"/>
</dbReference>
<dbReference type="FunFam" id="2.10.90.10:FF:000003">
    <property type="entry name" value="Bone morphogenetic protein 5"/>
    <property type="match status" value="1"/>
</dbReference>
<dbReference type="Gene3D" id="2.60.120.970">
    <property type="match status" value="1"/>
</dbReference>
<dbReference type="Gene3D" id="2.10.90.10">
    <property type="entry name" value="Cystine-knot cytokines"/>
    <property type="match status" value="1"/>
</dbReference>
<dbReference type="InterPro" id="IPR029034">
    <property type="entry name" value="Cystine-knot_cytokine"/>
</dbReference>
<dbReference type="InterPro" id="IPR001839">
    <property type="entry name" value="TGF-b_C"/>
</dbReference>
<dbReference type="InterPro" id="IPR001111">
    <property type="entry name" value="TGF-b_propeptide"/>
</dbReference>
<dbReference type="InterPro" id="IPR015615">
    <property type="entry name" value="TGF-beta-rel"/>
</dbReference>
<dbReference type="InterPro" id="IPR017948">
    <property type="entry name" value="TGFb_CS"/>
</dbReference>
<dbReference type="PANTHER" id="PTHR11848:SF139">
    <property type="entry name" value="BONE MORPHOGENETIC PROTEIN 5"/>
    <property type="match status" value="1"/>
</dbReference>
<dbReference type="PANTHER" id="PTHR11848">
    <property type="entry name" value="TGF-BETA FAMILY"/>
    <property type="match status" value="1"/>
</dbReference>
<dbReference type="Pfam" id="PF00019">
    <property type="entry name" value="TGF_beta"/>
    <property type="match status" value="1"/>
</dbReference>
<dbReference type="Pfam" id="PF00688">
    <property type="entry name" value="TGFb_propeptide"/>
    <property type="match status" value="1"/>
</dbReference>
<dbReference type="SMART" id="SM00204">
    <property type="entry name" value="TGFB"/>
    <property type="match status" value="1"/>
</dbReference>
<dbReference type="SUPFAM" id="SSF57501">
    <property type="entry name" value="Cystine-knot cytokines"/>
    <property type="match status" value="1"/>
</dbReference>
<dbReference type="PROSITE" id="PS00250">
    <property type="entry name" value="TGF_BETA_1"/>
    <property type="match status" value="1"/>
</dbReference>
<dbReference type="PROSITE" id="PS51362">
    <property type="entry name" value="TGF_BETA_2"/>
    <property type="match status" value="1"/>
</dbReference>
<feature type="signal peptide" evidence="3">
    <location>
        <begin position="1"/>
        <end position="25"/>
    </location>
</feature>
<feature type="propeptide" id="PRO_0000033868" evidence="3">
    <location>
        <begin position="26"/>
        <end position="314"/>
    </location>
</feature>
<feature type="chain" id="PRO_0000033869" description="Bone morphogenetic protein 5">
    <location>
        <begin position="315"/>
        <end position="452"/>
    </location>
</feature>
<feature type="region of interest" description="Disordered" evidence="4">
    <location>
        <begin position="316"/>
        <end position="345"/>
    </location>
</feature>
<feature type="glycosylation site" description="N-linked (GlcNAc...) asparagine" evidence="3">
    <location>
        <position position="209"/>
    </location>
</feature>
<feature type="glycosylation site" description="N-linked (GlcNAc...) asparagine" evidence="3">
    <location>
        <position position="325"/>
    </location>
</feature>
<feature type="glycosylation site" description="N-linked (GlcNAc...) asparagine" evidence="3">
    <location>
        <position position="343"/>
    </location>
</feature>
<feature type="glycosylation site" description="N-linked (GlcNAc...) asparagine" evidence="3">
    <location>
        <position position="393"/>
    </location>
</feature>
<feature type="disulfide bond" evidence="1">
    <location>
        <begin position="351"/>
        <end position="417"/>
    </location>
</feature>
<feature type="disulfide bond" evidence="1">
    <location>
        <begin position="380"/>
        <end position="449"/>
    </location>
</feature>
<feature type="disulfide bond" evidence="1">
    <location>
        <begin position="384"/>
        <end position="451"/>
    </location>
</feature>
<feature type="disulfide bond" description="Interchain" evidence="1">
    <location>
        <position position="416"/>
    </location>
</feature>
<feature type="splice variant" id="VSP_044321" description="In isoform 2." evidence="8">
    <original>E</original>
    <variation>EES</variation>
    <location>
        <position position="95"/>
    </location>
</feature>
<comment type="function">
    <text evidence="2 5 6 7">Growth factor of the TGF-beta superfamily that plays essential roles in many developmental processes, including cartilage and bone formation or neurogenesis (PubMed:29321139, PubMed:7958439). Initiates the canonical BMP signaling cascade by associating with type I receptor BMPR1A and type II receptor BMPR2. In turn, BMPR1A propagates signal by phosphorylating SMAD1/5/8 that travel to the nucleus and act as activators and repressors of transcription of target genes. Can also signal through non-canonical pathway such as MAPK p38 signaling cascade to promote chondrogenic differentiation (By similarity). Promotes the expression of HAMP, this is repressed by its interaction with ERFE (PubMed:30097509).</text>
</comment>
<comment type="subunit">
    <text evidence="6">Interacts with ERFE; the interaction inhibits BMP-induced transcription of HAMP.</text>
</comment>
<comment type="subcellular location">
    <subcellularLocation>
        <location evidence="1">Secreted</location>
    </subcellularLocation>
</comment>
<comment type="alternative products">
    <event type="alternative splicing"/>
    <isoform>
        <id>P49003-1</id>
        <name>1</name>
        <sequence type="displayed"/>
    </isoform>
    <isoform>
        <id>P49003-2</id>
        <name>2</name>
        <sequence type="described" ref="VSP_044321"/>
    </isoform>
</comment>
<comment type="disruption phenotype">
    <text evidence="5 7">Deletion mutant mice show a number of skeletal defects, including small ears, several reduced vertebral processes, and a reduced number of ribs and sesamoid bones (PubMed:7958439). BMP5/7-deficient mice lack midbrain dopaminergic neurons due to reduced neurogenesis in the midbrain dopaminergic progenitor domain (PubMed:29321139).</text>
</comment>
<comment type="similarity">
    <text evidence="9">Belongs to the TGF-beta family.</text>
</comment>
<organism>
    <name type="scientific">Mus musculus</name>
    <name type="common">Mouse</name>
    <dbReference type="NCBI Taxonomy" id="10090"/>
    <lineage>
        <taxon>Eukaryota</taxon>
        <taxon>Metazoa</taxon>
        <taxon>Chordata</taxon>
        <taxon>Craniata</taxon>
        <taxon>Vertebrata</taxon>
        <taxon>Euteleostomi</taxon>
        <taxon>Mammalia</taxon>
        <taxon>Eutheria</taxon>
        <taxon>Euarchontoglires</taxon>
        <taxon>Glires</taxon>
        <taxon>Rodentia</taxon>
        <taxon>Myomorpha</taxon>
        <taxon>Muroidea</taxon>
        <taxon>Muridae</taxon>
        <taxon>Murinae</taxon>
        <taxon>Mus</taxon>
        <taxon>Mus</taxon>
    </lineage>
</organism>
<sequence length="452" mass="51512">MHWTVFLLRGIVGFLWSGWVQVGYAKGGLGDNHVHSSFIYRRLRNHERREIQREILSILGLPHRPRPFSPGKQASSAPLFMLDLYNAMASEDNPEEYLVRVSLAGEAKETRKGYPASPNGYAHRLHLPPRTPLTTQSPPLASLHDTNFLNDADMVMSFVNLVERDKDFSHQRRHYKEFRFDLTQIPHGEAVTAAEFRIYKDKGNHRFENETIKISIYQIIKEYTNRDADLFLLDTRKTQALDVGWLVFDITVTSNHWVINPQNNLGLQLCAETGDGRSINVKSAGLVGRHGPQSKQPFMVAFFKASEVLLRSVRAASKRKNQNRNKSNSHQDPSRMPSAGDYNTSEQKQACKKHELYVSFRDLGWQDWIIAPEGYAAFYCDGECSFPLNAHMNATNHAIVQTLVHLMFPDHVPKPCCAPTKLNAISVLYFDDSSNVILKKYRNMVVRSCGCH</sequence>